<organism>
    <name type="scientific">Shigella flexneri</name>
    <dbReference type="NCBI Taxonomy" id="623"/>
    <lineage>
        <taxon>Bacteria</taxon>
        <taxon>Pseudomonadati</taxon>
        <taxon>Pseudomonadota</taxon>
        <taxon>Gammaproteobacteria</taxon>
        <taxon>Enterobacterales</taxon>
        <taxon>Enterobacteriaceae</taxon>
        <taxon>Shigella</taxon>
    </lineage>
</organism>
<gene>
    <name evidence="1" type="primary">proC</name>
    <name type="ordered locus">SF0322</name>
    <name type="ordered locus">S0330</name>
</gene>
<keyword id="KW-0028">Amino-acid biosynthesis</keyword>
<keyword id="KW-0963">Cytoplasm</keyword>
<keyword id="KW-0521">NADP</keyword>
<keyword id="KW-0560">Oxidoreductase</keyword>
<keyword id="KW-0641">Proline biosynthesis</keyword>
<keyword id="KW-1185">Reference proteome</keyword>
<comment type="function">
    <text evidence="1">Catalyzes the reduction of 1-pyrroline-5-carboxylate (PCA) to L-proline.</text>
</comment>
<comment type="catalytic activity">
    <reaction evidence="1">
        <text>L-proline + NADP(+) = (S)-1-pyrroline-5-carboxylate + NADPH + 2 H(+)</text>
        <dbReference type="Rhea" id="RHEA:14109"/>
        <dbReference type="ChEBI" id="CHEBI:15378"/>
        <dbReference type="ChEBI" id="CHEBI:17388"/>
        <dbReference type="ChEBI" id="CHEBI:57783"/>
        <dbReference type="ChEBI" id="CHEBI:58349"/>
        <dbReference type="ChEBI" id="CHEBI:60039"/>
        <dbReference type="EC" id="1.5.1.2"/>
    </reaction>
</comment>
<comment type="catalytic activity">
    <reaction evidence="1">
        <text>L-proline + NAD(+) = (S)-1-pyrroline-5-carboxylate + NADH + 2 H(+)</text>
        <dbReference type="Rhea" id="RHEA:14105"/>
        <dbReference type="ChEBI" id="CHEBI:15378"/>
        <dbReference type="ChEBI" id="CHEBI:17388"/>
        <dbReference type="ChEBI" id="CHEBI:57540"/>
        <dbReference type="ChEBI" id="CHEBI:57945"/>
        <dbReference type="ChEBI" id="CHEBI:60039"/>
        <dbReference type="EC" id="1.5.1.2"/>
    </reaction>
</comment>
<comment type="pathway">
    <text evidence="1">Amino-acid biosynthesis; L-proline biosynthesis; L-proline from L-glutamate 5-semialdehyde: step 1/1.</text>
</comment>
<comment type="subcellular location">
    <subcellularLocation>
        <location evidence="1">Cytoplasm</location>
    </subcellularLocation>
</comment>
<comment type="similarity">
    <text evidence="1">Belongs to the pyrroline-5-carboxylate reductase family.</text>
</comment>
<dbReference type="EC" id="1.5.1.2" evidence="1"/>
<dbReference type="EMBL" id="AE005674">
    <property type="protein sequence ID" value="AAN41981.1"/>
    <property type="molecule type" value="Genomic_DNA"/>
</dbReference>
<dbReference type="EMBL" id="AE014073">
    <property type="protein sequence ID" value="AAP15859.1"/>
    <property type="molecule type" value="Genomic_DNA"/>
</dbReference>
<dbReference type="RefSeq" id="NP_706274.1">
    <property type="nucleotide sequence ID" value="NC_004337.2"/>
</dbReference>
<dbReference type="RefSeq" id="WP_001295331.1">
    <property type="nucleotide sequence ID" value="NZ_WPGW01000023.1"/>
</dbReference>
<dbReference type="SMR" id="P0A9L9"/>
<dbReference type="STRING" id="198214.SF0322"/>
<dbReference type="PaxDb" id="198214-SF0322"/>
<dbReference type="GeneID" id="1027435"/>
<dbReference type="GeneID" id="93777075"/>
<dbReference type="KEGG" id="sfl:SF0322"/>
<dbReference type="KEGG" id="sfx:S0330"/>
<dbReference type="PATRIC" id="fig|198214.7.peg.370"/>
<dbReference type="HOGENOM" id="CLU_042344_3_1_6"/>
<dbReference type="UniPathway" id="UPA00098">
    <property type="reaction ID" value="UER00361"/>
</dbReference>
<dbReference type="Proteomes" id="UP000001006">
    <property type="component" value="Chromosome"/>
</dbReference>
<dbReference type="Proteomes" id="UP000002673">
    <property type="component" value="Chromosome"/>
</dbReference>
<dbReference type="GO" id="GO:0005737">
    <property type="term" value="C:cytoplasm"/>
    <property type="evidence" value="ECO:0007669"/>
    <property type="project" value="UniProtKB-SubCell"/>
</dbReference>
<dbReference type="GO" id="GO:0004735">
    <property type="term" value="F:pyrroline-5-carboxylate reductase activity"/>
    <property type="evidence" value="ECO:0007669"/>
    <property type="project" value="UniProtKB-UniRule"/>
</dbReference>
<dbReference type="GO" id="GO:0055129">
    <property type="term" value="P:L-proline biosynthetic process"/>
    <property type="evidence" value="ECO:0007669"/>
    <property type="project" value="UniProtKB-UniRule"/>
</dbReference>
<dbReference type="FunFam" id="1.10.3730.10:FF:000001">
    <property type="entry name" value="Pyrroline-5-carboxylate reductase"/>
    <property type="match status" value="1"/>
</dbReference>
<dbReference type="FunFam" id="3.40.50.720:FF:000105">
    <property type="entry name" value="Pyrroline-5-carboxylate reductase"/>
    <property type="match status" value="1"/>
</dbReference>
<dbReference type="Gene3D" id="3.40.50.720">
    <property type="entry name" value="NAD(P)-binding Rossmann-like Domain"/>
    <property type="match status" value="1"/>
</dbReference>
<dbReference type="Gene3D" id="1.10.3730.10">
    <property type="entry name" value="ProC C-terminal domain-like"/>
    <property type="match status" value="1"/>
</dbReference>
<dbReference type="HAMAP" id="MF_01925">
    <property type="entry name" value="P5C_reductase"/>
    <property type="match status" value="1"/>
</dbReference>
<dbReference type="InterPro" id="IPR008927">
    <property type="entry name" value="6-PGluconate_DH-like_C_sf"/>
</dbReference>
<dbReference type="InterPro" id="IPR036291">
    <property type="entry name" value="NAD(P)-bd_dom_sf"/>
</dbReference>
<dbReference type="InterPro" id="IPR028939">
    <property type="entry name" value="P5C_Rdtase_cat_N"/>
</dbReference>
<dbReference type="InterPro" id="IPR053790">
    <property type="entry name" value="P5CR-like_CS"/>
</dbReference>
<dbReference type="InterPro" id="IPR029036">
    <property type="entry name" value="P5CR_dimer"/>
</dbReference>
<dbReference type="InterPro" id="IPR000304">
    <property type="entry name" value="Pyrroline-COOH_reductase"/>
</dbReference>
<dbReference type="NCBIfam" id="TIGR00112">
    <property type="entry name" value="proC"/>
    <property type="match status" value="1"/>
</dbReference>
<dbReference type="PANTHER" id="PTHR11645">
    <property type="entry name" value="PYRROLINE-5-CARBOXYLATE REDUCTASE"/>
    <property type="match status" value="1"/>
</dbReference>
<dbReference type="PANTHER" id="PTHR11645:SF0">
    <property type="entry name" value="PYRROLINE-5-CARBOXYLATE REDUCTASE 3"/>
    <property type="match status" value="1"/>
</dbReference>
<dbReference type="Pfam" id="PF03807">
    <property type="entry name" value="F420_oxidored"/>
    <property type="match status" value="1"/>
</dbReference>
<dbReference type="Pfam" id="PF14748">
    <property type="entry name" value="P5CR_dimer"/>
    <property type="match status" value="1"/>
</dbReference>
<dbReference type="PIRSF" id="PIRSF000193">
    <property type="entry name" value="Pyrrol-5-carb_rd"/>
    <property type="match status" value="1"/>
</dbReference>
<dbReference type="SUPFAM" id="SSF48179">
    <property type="entry name" value="6-phosphogluconate dehydrogenase C-terminal domain-like"/>
    <property type="match status" value="1"/>
</dbReference>
<dbReference type="SUPFAM" id="SSF51735">
    <property type="entry name" value="NAD(P)-binding Rossmann-fold domains"/>
    <property type="match status" value="1"/>
</dbReference>
<dbReference type="PROSITE" id="PS00521">
    <property type="entry name" value="P5CR"/>
    <property type="match status" value="1"/>
</dbReference>
<accession>P0A9L9</accession>
<accession>P00373</accession>
<reference key="1">
    <citation type="journal article" date="2002" name="Nucleic Acids Res.">
        <title>Genome sequence of Shigella flexneri 2a: insights into pathogenicity through comparison with genomes of Escherichia coli K12 and O157.</title>
        <authorList>
            <person name="Jin Q."/>
            <person name="Yuan Z."/>
            <person name="Xu J."/>
            <person name="Wang Y."/>
            <person name="Shen Y."/>
            <person name="Lu W."/>
            <person name="Wang J."/>
            <person name="Liu H."/>
            <person name="Yang J."/>
            <person name="Yang F."/>
            <person name="Zhang X."/>
            <person name="Zhang J."/>
            <person name="Yang G."/>
            <person name="Wu H."/>
            <person name="Qu D."/>
            <person name="Dong J."/>
            <person name="Sun L."/>
            <person name="Xue Y."/>
            <person name="Zhao A."/>
            <person name="Gao Y."/>
            <person name="Zhu J."/>
            <person name="Kan B."/>
            <person name="Ding K."/>
            <person name="Chen S."/>
            <person name="Cheng H."/>
            <person name="Yao Z."/>
            <person name="He B."/>
            <person name="Chen R."/>
            <person name="Ma D."/>
            <person name="Qiang B."/>
            <person name="Wen Y."/>
            <person name="Hou Y."/>
            <person name="Yu J."/>
        </authorList>
    </citation>
    <scope>NUCLEOTIDE SEQUENCE [LARGE SCALE GENOMIC DNA]</scope>
    <source>
        <strain>301 / Serotype 2a</strain>
    </source>
</reference>
<reference key="2">
    <citation type="journal article" date="2003" name="Infect. Immun.">
        <title>Complete genome sequence and comparative genomics of Shigella flexneri serotype 2a strain 2457T.</title>
        <authorList>
            <person name="Wei J."/>
            <person name="Goldberg M.B."/>
            <person name="Burland V."/>
            <person name="Venkatesan M.M."/>
            <person name="Deng W."/>
            <person name="Fournier G."/>
            <person name="Mayhew G.F."/>
            <person name="Plunkett G. III"/>
            <person name="Rose D.J."/>
            <person name="Darling A."/>
            <person name="Mau B."/>
            <person name="Perna N.T."/>
            <person name="Payne S.M."/>
            <person name="Runyen-Janecky L.J."/>
            <person name="Zhou S."/>
            <person name="Schwartz D.C."/>
            <person name="Blattner F.R."/>
        </authorList>
    </citation>
    <scope>NUCLEOTIDE SEQUENCE [LARGE SCALE GENOMIC DNA]</scope>
    <source>
        <strain>ATCC 700930 / 2457T / Serotype 2a</strain>
    </source>
</reference>
<name>P5CR_SHIFL</name>
<evidence type="ECO:0000255" key="1">
    <source>
        <dbReference type="HAMAP-Rule" id="MF_01925"/>
    </source>
</evidence>
<protein>
    <recommendedName>
        <fullName evidence="1">Pyrroline-5-carboxylate reductase</fullName>
        <shortName evidence="1">P5C reductase</shortName>
        <shortName evidence="1">P5CR</shortName>
        <ecNumber evidence="1">1.5.1.2</ecNumber>
    </recommendedName>
    <alternativeName>
        <fullName evidence="1">PCA reductase</fullName>
    </alternativeName>
</protein>
<feature type="chain" id="PRO_0000187297" description="Pyrroline-5-carboxylate reductase">
    <location>
        <begin position="1"/>
        <end position="269"/>
    </location>
</feature>
<proteinExistence type="inferred from homology"/>
<sequence length="269" mass="28145">MEKKIGFIGCGNMGKAILGGLIASGQVLPGQIWVYTPSPDKVAALHDQFGINAAESAQEVAQIADIIFAAVKPGIMIKVLSEITSSLNKDSLVVSIAAGVTLDQLARALGHDRKIIRAMPNTPALVNAGMTSVTPNALVTPEDTADVLNIFRCFGEAEVIAEPMIHPVVGVSGSSPAYVFMFIEAMADAAVLGGMPRAQAYKFAAQAVMGSAKMVLETGEHPGALKDMVCSPGGTTIEAVRVLEEKGFRAAVIEAMTKCMEKSEKLSKS</sequence>